<proteinExistence type="inferred from homology"/>
<reference key="1">
    <citation type="journal article" date="2007" name="Nature">
        <title>Evolution of genes and genomes on the Drosophila phylogeny.</title>
        <authorList>
            <consortium name="Drosophila 12 genomes consortium"/>
        </authorList>
    </citation>
    <scope>NUCLEOTIDE SEQUENCE [LARGE SCALE GENOMIC DNA]</scope>
    <source>
        <strain>Tucson 14021-0224.01</strain>
    </source>
</reference>
<keyword id="KW-0963">Cytoplasm</keyword>
<keyword id="KW-0217">Developmental protein</keyword>
<keyword id="KW-0221">Differentiation</keyword>
<keyword id="KW-0238">DNA-binding</keyword>
<keyword id="KW-0469">Meiosis</keyword>
<keyword id="KW-0539">Nucleus</keyword>
<keyword id="KW-0896">Oogenesis</keyword>
<keyword id="KW-0678">Repressor</keyword>
<keyword id="KW-0943">RNA-mediated gene silencing</keyword>
<keyword id="KW-0804">Transcription</keyword>
<keyword id="KW-0805">Transcription regulation</keyword>
<dbReference type="EMBL" id="CH954178">
    <property type="protein sequence ID" value="EDV52785.1"/>
    <property type="molecule type" value="Genomic_DNA"/>
</dbReference>
<dbReference type="SMR" id="B3NEF0"/>
<dbReference type="EnsemblMetazoa" id="FBtr0136328">
    <property type="protein sequence ID" value="FBpp0134820"/>
    <property type="gene ID" value="FBgn0108509"/>
</dbReference>
<dbReference type="EnsemblMetazoa" id="XM_001973723.3">
    <property type="protein sequence ID" value="XP_001973759.1"/>
    <property type="gene ID" value="LOC6544104"/>
</dbReference>
<dbReference type="GeneID" id="6544104"/>
<dbReference type="KEGG" id="der:6544104"/>
<dbReference type="CTD" id="84944"/>
<dbReference type="eggNOG" id="ENOG502QTQB">
    <property type="taxonomic scope" value="Eukaryota"/>
</dbReference>
<dbReference type="HOGENOM" id="CLU_044134_0_0_1"/>
<dbReference type="OMA" id="KHEIFDH"/>
<dbReference type="OrthoDB" id="24555at2759"/>
<dbReference type="PhylomeDB" id="B3NEF0"/>
<dbReference type="Proteomes" id="UP000008711">
    <property type="component" value="Unassembled WGS sequence"/>
</dbReference>
<dbReference type="GO" id="GO:0005737">
    <property type="term" value="C:cytoplasm"/>
    <property type="evidence" value="ECO:0000250"/>
    <property type="project" value="UniProtKB"/>
</dbReference>
<dbReference type="GO" id="GO:0005634">
    <property type="term" value="C:nucleus"/>
    <property type="evidence" value="ECO:0000250"/>
    <property type="project" value="UniProtKB"/>
</dbReference>
<dbReference type="GO" id="GO:0043186">
    <property type="term" value="C:P granule"/>
    <property type="evidence" value="ECO:0000250"/>
    <property type="project" value="UniProtKB"/>
</dbReference>
<dbReference type="GO" id="GO:0048471">
    <property type="term" value="C:perinuclear region of cytoplasm"/>
    <property type="evidence" value="ECO:0000250"/>
    <property type="project" value="UniProtKB"/>
</dbReference>
<dbReference type="GO" id="GO:0000976">
    <property type="term" value="F:transcription cis-regulatory region binding"/>
    <property type="evidence" value="ECO:0000250"/>
    <property type="project" value="UniProtKB"/>
</dbReference>
<dbReference type="GO" id="GO:0030718">
    <property type="term" value="P:germ-line stem cell population maintenance"/>
    <property type="evidence" value="ECO:0000250"/>
    <property type="project" value="UniProtKB"/>
</dbReference>
<dbReference type="GO" id="GO:0007140">
    <property type="term" value="P:male meiotic nuclear division"/>
    <property type="evidence" value="ECO:0007669"/>
    <property type="project" value="TreeGrafter"/>
</dbReference>
<dbReference type="GO" id="GO:0045892">
    <property type="term" value="P:negative regulation of DNA-templated transcription"/>
    <property type="evidence" value="ECO:0000250"/>
    <property type="project" value="UniProtKB"/>
</dbReference>
<dbReference type="GO" id="GO:0048477">
    <property type="term" value="P:oogenesis"/>
    <property type="evidence" value="ECO:0007669"/>
    <property type="project" value="UniProtKB-KW"/>
</dbReference>
<dbReference type="GO" id="GO:0034587">
    <property type="term" value="P:piRNA processing"/>
    <property type="evidence" value="ECO:0000250"/>
    <property type="project" value="UniProtKB"/>
</dbReference>
<dbReference type="GO" id="GO:0060964">
    <property type="term" value="P:regulation of miRNA-mediated gene silencing"/>
    <property type="evidence" value="ECO:0007669"/>
    <property type="project" value="InterPro"/>
</dbReference>
<dbReference type="GO" id="GO:0031047">
    <property type="term" value="P:regulatory ncRNA-mediated gene silencing"/>
    <property type="evidence" value="ECO:0000250"/>
    <property type="project" value="UniProtKB"/>
</dbReference>
<dbReference type="GO" id="GO:0007283">
    <property type="term" value="P:spermatogenesis"/>
    <property type="evidence" value="ECO:0000250"/>
    <property type="project" value="UniProtKB"/>
</dbReference>
<dbReference type="FunFam" id="1.10.30.10:FF:000057">
    <property type="entry name" value="Protein maelstrom 2"/>
    <property type="match status" value="1"/>
</dbReference>
<dbReference type="Gene3D" id="1.10.30.10">
    <property type="entry name" value="High mobility group box domain"/>
    <property type="match status" value="1"/>
</dbReference>
<dbReference type="InterPro" id="IPR036910">
    <property type="entry name" value="HMG_box_dom_sf"/>
</dbReference>
<dbReference type="InterPro" id="IPR024970">
    <property type="entry name" value="Maelstrom"/>
</dbReference>
<dbReference type="InterPro" id="IPR039259">
    <property type="entry name" value="Protein_maelstrom"/>
</dbReference>
<dbReference type="PANTHER" id="PTHR21358">
    <property type="entry name" value="PROTEIN MAELSTROM HOMOLOG"/>
    <property type="match status" value="1"/>
</dbReference>
<dbReference type="PANTHER" id="PTHR21358:SF4">
    <property type="entry name" value="PROTEIN MAELSTROM HOMOLOG"/>
    <property type="match status" value="1"/>
</dbReference>
<dbReference type="Pfam" id="PF13017">
    <property type="entry name" value="Maelstrom"/>
    <property type="match status" value="1"/>
</dbReference>
<dbReference type="SUPFAM" id="SSF47095">
    <property type="entry name" value="HMG-box"/>
    <property type="match status" value="1"/>
</dbReference>
<feature type="chain" id="PRO_0000367297" description="Protein maelstrom">
    <location>
        <begin position="1"/>
        <end position="465"/>
    </location>
</feature>
<feature type="DNA-binding region" description="HMG box">
    <location>
        <begin position="2"/>
        <end position="69"/>
    </location>
</feature>
<feature type="region of interest" description="Disordered" evidence="2">
    <location>
        <begin position="373"/>
        <end position="394"/>
    </location>
</feature>
<feature type="region of interest" description="Disordered" evidence="2">
    <location>
        <begin position="419"/>
        <end position="443"/>
    </location>
</feature>
<feature type="compositionally biased region" description="Low complexity" evidence="2">
    <location>
        <begin position="381"/>
        <end position="391"/>
    </location>
</feature>
<feature type="compositionally biased region" description="Basic and acidic residues" evidence="2">
    <location>
        <begin position="422"/>
        <end position="433"/>
    </location>
</feature>
<organism>
    <name type="scientific">Drosophila erecta</name>
    <name type="common">Fruit fly</name>
    <dbReference type="NCBI Taxonomy" id="7220"/>
    <lineage>
        <taxon>Eukaryota</taxon>
        <taxon>Metazoa</taxon>
        <taxon>Ecdysozoa</taxon>
        <taxon>Arthropoda</taxon>
        <taxon>Hexapoda</taxon>
        <taxon>Insecta</taxon>
        <taxon>Pterygota</taxon>
        <taxon>Neoptera</taxon>
        <taxon>Endopterygota</taxon>
        <taxon>Diptera</taxon>
        <taxon>Brachycera</taxon>
        <taxon>Muscomorpha</taxon>
        <taxon>Ephydroidea</taxon>
        <taxon>Drosophilidae</taxon>
        <taxon>Drosophila</taxon>
        <taxon>Sophophora</taxon>
    </lineage>
</organism>
<sequence length="465" mass="52343">MAPKKHSAFMVFVTEWRNHNVEGRRMTLPQAVSHCGTIWEKMTAQQRGPYQSGAKDADVADRAKRERLNCHGQGIAQVDQVQKEAAESLMHMKRSTERLVINAKKSHDLENAKFVFATFNYFTKALTTDVYVPAEFAACEYSLKEGIRSIYSSMIDPGQIIFGQGSDALHHSSTTHDLPLPPNALGEKNMAKLYRNIIDYLTKCQGGDKPLIVFTPAENIAMVKSCFRYLECEDDSKDGGRTIQVFDIEYLLFILKKEVMDVADLNDEKINKFVTDAFFKKDFFEFTAGIACQYHEDNDRTKYCTQSMVTRWAYTFSDFMCGDLAITVQPGKHIPAHTKPNYRIISSDASSLAHESSFDSFYSLPGSRVKKENQSEDVLLSSSRPSVESSSYTPTDHTAFTADLSKLCEFPSLGMRNSSKHRGLDVSAQRERNAGAWNLPTHSRSIQKFSDNDFSVTGADGKHKN</sequence>
<evidence type="ECO:0000250" key="1"/>
<evidence type="ECO:0000256" key="2">
    <source>
        <dbReference type="SAM" id="MobiDB-lite"/>
    </source>
</evidence>
<evidence type="ECO:0000305" key="3"/>
<comment type="function">
    <text evidence="1">Involved both in the piRNA and miRNA metabolic processes. As a component of the meiotic nuage, plays a central role during oogenesis by repressing transposable elements and preventing their mobilization, which is essential for the germline integrity. Repression of transposable elements is mediated via the piRNA metabolic process, which mediates the repression of transposable elements during meiosis by forming complexes composed of piRNAs and Piwi proteins and governs the repression of transposons. As a nuclear component, it is required for proper differentiation in the germline stem cell (GSC) lineage by repressing microRNA-7 (miR-7), thereby acting as an indirect regulator of bag-of-marbles (Bam). Acts by binding to the promoter of miR-7 gene and repressing its expression; miR-7 repression alleviates the Bam repression by miR-7, thereby allowing differentiation in the germline stem cell (GSC) lineage (By similarity).</text>
</comment>
<comment type="subcellular location">
    <subcellularLocation>
        <location>Cytoplasm</location>
    </subcellularLocation>
    <subcellularLocation>
        <location>Nucleus</location>
    </subcellularLocation>
    <text evidence="1">Component of the meiotic nuage, also named P granule, a germ-cell-specific organelle required to repress transposon activity during meiosis.</text>
</comment>
<comment type="similarity">
    <text evidence="3">Belongs to the maelstrom family.</text>
</comment>
<gene>
    <name type="primary">mael</name>
    <name type="ORF">GG16274</name>
</gene>
<protein>
    <recommendedName>
        <fullName>Protein maelstrom</fullName>
    </recommendedName>
</protein>
<accession>B3NEF0</accession>
<name>MAEL_DROER</name>